<evidence type="ECO:0000269" key="1">
    <source>
    </source>
</evidence>
<evidence type="ECO:0000303" key="2">
    <source>
    </source>
</evidence>
<evidence type="ECO:0000305" key="3"/>
<protein>
    <recommendedName>
        <fullName evidence="2">Urease accessory protein 6</fullName>
    </recommendedName>
</protein>
<sequence length="317" mass="34532">MASLNPSAKELHLLYVLTDSNLPTGGFVSSSGLESFAKHGFLSSQYSYTPKEFKDGVLGKKNMTGGLVDFARAEVSNYASTTGGFVMDGWTCVNDSRKASKAGNGIIEDEVQRVLQKIQALDKYHECTLLSHVGRRSSKAQGVAMLTLFSRGLSRPVGIDEYLNEDGGGPGSTDELGVKIVEGYKKMVILEKAPGHLAVCWGVITAALGLPVDRALHLHLFLHARSLLSSAVRLNIIGPYASSQLLLHPYRDIINQEVEKLSNCTTGIIEDKAEKCGEEEDLWAWTEDAEKGPATTWPLGEVLMGRHDIQHSRIFNS</sequence>
<dbReference type="EMBL" id="CP003825">
    <property type="protein sequence ID" value="AFR95762.1"/>
    <property type="molecule type" value="Genomic_DNA"/>
</dbReference>
<dbReference type="EMBL" id="CP003825">
    <property type="protein sequence ID" value="AGV14444.1"/>
    <property type="molecule type" value="Genomic_DNA"/>
</dbReference>
<dbReference type="EMBL" id="CP003825">
    <property type="protein sequence ID" value="AGV14445.1"/>
    <property type="molecule type" value="Genomic_DNA"/>
</dbReference>
<dbReference type="RefSeq" id="XP_012049908.1">
    <property type="nucleotide sequence ID" value="XM_012194518.1"/>
</dbReference>
<dbReference type="RefSeq" id="XP_012049909.1">
    <property type="nucleotide sequence ID" value="XM_012194519.1"/>
</dbReference>
<dbReference type="RefSeq" id="XP_012049910.1">
    <property type="nucleotide sequence ID" value="XM_012194520.1"/>
</dbReference>
<dbReference type="GeneID" id="23885715"/>
<dbReference type="KEGG" id="cng:CNAG_02057"/>
<dbReference type="VEuPathDB" id="FungiDB:CNAG_02057"/>
<dbReference type="HOGENOM" id="CLU_049215_0_1_1"/>
<dbReference type="OrthoDB" id="5667at5206"/>
<dbReference type="Proteomes" id="UP000010091">
    <property type="component" value="Chromosome 6"/>
</dbReference>
<dbReference type="GO" id="GO:0016151">
    <property type="term" value="F:nickel cation binding"/>
    <property type="evidence" value="ECO:0007669"/>
    <property type="project" value="InterPro"/>
</dbReference>
<dbReference type="Gene3D" id="1.10.4190.10">
    <property type="entry name" value="Urease accessory protein UreF"/>
    <property type="match status" value="1"/>
</dbReference>
<dbReference type="InterPro" id="IPR002639">
    <property type="entry name" value="UreF"/>
</dbReference>
<dbReference type="InterPro" id="IPR038277">
    <property type="entry name" value="UreF_sf"/>
</dbReference>
<dbReference type="PANTHER" id="PTHR33620">
    <property type="entry name" value="UREASE ACCESSORY PROTEIN F"/>
    <property type="match status" value="1"/>
</dbReference>
<dbReference type="PANTHER" id="PTHR33620:SF1">
    <property type="entry name" value="UREASE ACCESSORY PROTEIN F"/>
    <property type="match status" value="1"/>
</dbReference>
<dbReference type="Pfam" id="PF01730">
    <property type="entry name" value="UreF"/>
    <property type="match status" value="1"/>
</dbReference>
<proteinExistence type="evidence at protein level"/>
<name>URE6_CRYNH</name>
<gene>
    <name evidence="2" type="primary">URE6</name>
    <name type="ORF">CNAG_02057</name>
</gene>
<reference key="1">
    <citation type="submission" date="2012-09" db="EMBL/GenBank/DDBJ databases">
        <title>The Genome Sequence of Cryptococcus neoformans grubii H99.</title>
        <authorList>
            <consortium name="The Broad Institute Genomics Platform"/>
            <person name="Cuomo C."/>
            <person name="Janbon G.J."/>
            <person name="Paulet D."/>
            <person name="Neuveglise C."/>
            <person name="Dietrich F."/>
            <person name="Allen A."/>
            <person name="Stajich J.S."/>
            <person name="Heitman J."/>
            <person name="Kronstad J."/>
            <person name="Walker B."/>
            <person name="Young S.K."/>
            <person name="Zeng Q."/>
            <person name="Gargeya S."/>
            <person name="Fitzgerald M."/>
            <person name="Haas B."/>
            <person name="Abouelleil A."/>
            <person name="Allen A."/>
            <person name="Alvarado L."/>
            <person name="Chapman S.B."/>
            <person name="Gainer-Dewar J."/>
            <person name="Goldberg J."/>
            <person name="Griggs A."/>
            <person name="Gujja S."/>
            <person name="Hansen M."/>
            <person name="Howarth C."/>
            <person name="Imamovic A."/>
            <person name="Ireland A."/>
            <person name="Larimer J."/>
            <person name="McCowan C."/>
            <person name="Murphy C."/>
            <person name="Pearson M.D."/>
            <person name="Poon T."/>
            <person name="Priest M."/>
            <person name="Roberts A.D."/>
            <person name="Saif S."/>
            <person name="Shea T.D."/>
            <person name="Sykes S.N."/>
            <person name="Wortman J."/>
            <person name="Nusbaum C."/>
            <person name="Birren B."/>
        </authorList>
    </citation>
    <scope>NUCLEOTIDE SEQUENCE [LARGE SCALE GENOMIC DNA]</scope>
    <source>
        <strain>H99 / ATCC 208821 / CBS 10515 / FGSC 9487</strain>
    </source>
</reference>
<reference key="2">
    <citation type="submission" date="2012-09" db="EMBL/GenBank/DDBJ databases">
        <authorList>
            <consortium name="The Broad Institute Genome Sequencing Platform"/>
            <person name="Birren B."/>
            <person name="Cuomo C."/>
            <person name="Gargeya S."/>
            <person name="Jaffe D."/>
            <person name="Young S.K."/>
            <person name="Wortman J."/>
            <person name="Zeng Q."/>
            <person name="Alvarado L."/>
            <person name="Dietrich F."/>
            <person name="Allen A."/>
            <person name="Stajich J.E."/>
            <person name="Heitman J."/>
            <person name="Kronstad J."/>
        </authorList>
    </citation>
    <scope>NUCLEOTIDE SEQUENCE [LARGE SCALE GENOMIC DNA]</scope>
    <source>
        <strain>H99 / ATCC 208821 / CBS 10515 / FGSC 9487</strain>
    </source>
</reference>
<reference key="3">
    <citation type="journal article" date="2014" name="PLoS Genet.">
        <title>Analysis of the genome and transcriptome of Cryptococcus neoformans var. grubii reveals complex RNA expression and microevolution leading to virulence attenuation.</title>
        <authorList>
            <person name="Janbon G."/>
            <person name="Ormerod K.L."/>
            <person name="Paulet D."/>
            <person name="Byrnes E.J. III"/>
            <person name="Yadav V."/>
            <person name="Chatterjee G."/>
            <person name="Mullapudi N."/>
            <person name="Hon C.-C."/>
            <person name="Billmyre R.B."/>
            <person name="Brunel F."/>
            <person name="Bahn Y.-S."/>
            <person name="Chen W."/>
            <person name="Chen Y."/>
            <person name="Chow E.W.L."/>
            <person name="Coppee J.-Y."/>
            <person name="Floyd-Averette A."/>
            <person name="Gaillardin C."/>
            <person name="Gerik K.J."/>
            <person name="Goldberg J."/>
            <person name="Gonzalez-Hilarion S."/>
            <person name="Gujja S."/>
            <person name="Hamlin J.L."/>
            <person name="Hsueh Y.-P."/>
            <person name="Ianiri G."/>
            <person name="Jones S."/>
            <person name="Kodira C.D."/>
            <person name="Kozubowski L."/>
            <person name="Lam W."/>
            <person name="Marra M."/>
            <person name="Mesner L.D."/>
            <person name="Mieczkowski P.A."/>
            <person name="Moyrand F."/>
            <person name="Nielsen K."/>
            <person name="Proux C."/>
            <person name="Rossignol T."/>
            <person name="Schein J.E."/>
            <person name="Sun S."/>
            <person name="Wollschlaeger C."/>
            <person name="Wood I.A."/>
            <person name="Zeng Q."/>
            <person name="Neuveglise C."/>
            <person name="Newlon C.S."/>
            <person name="Perfect J.R."/>
            <person name="Lodge J.K."/>
            <person name="Idnurm A."/>
            <person name="Stajich J.E."/>
            <person name="Kronstad J.W."/>
            <person name="Sanyal K."/>
            <person name="Heitman J."/>
            <person name="Fraser J.A."/>
            <person name="Cuomo C.A."/>
            <person name="Dietrich F.S."/>
        </authorList>
    </citation>
    <scope>NUCLEOTIDE SEQUENCE [LARGE SCALE GENOMIC DNA]</scope>
    <source>
        <strain>H99 / ATCC 208821 / CBS 10515 / FGSC 9487</strain>
    </source>
</reference>
<reference key="4">
    <citation type="journal article" date="2013" name="MBio">
        <title>Factors required for activation of urease as a virulence determinant in Cryptococcus neoformans.</title>
        <authorList>
            <person name="Singh A."/>
            <person name="Panting R.J."/>
            <person name="Varma A."/>
            <person name="Saijo T."/>
            <person name="Waldron K.J."/>
            <person name="Jong A."/>
            <person name="Ngamskulrungroj P."/>
            <person name="Chang Y.C."/>
            <person name="Rutherford J.C."/>
            <person name="Kwon-Chung K.J."/>
        </authorList>
    </citation>
    <scope>FUNCTION</scope>
    <scope>DISRUPTION PHENOTYPE</scope>
    <scope>SUBUNIT</scope>
</reference>
<keyword id="KW-0143">Chaperone</keyword>
<keyword id="KW-0996">Nickel insertion</keyword>
<keyword id="KW-0843">Virulence</keyword>
<accession>J9VMQ5</accession>
<comment type="function">
    <text evidence="1">Urease accessory protein required for the maturation and activation of urease via the functional incorporation of the urease nickel metallocenter (PubMed:23653445). Plays a role in host brain invasion (PubMed:23653445).</text>
</comment>
<comment type="subunit">
    <text evidence="1">URE4, URE6 and URE7 may form a complex that acts as a GTP-hydrolysis-dependent molecular chaperone, activating the urease apoprotein URE1.</text>
</comment>
<comment type="disruption phenotype">
    <text evidence="1">Fails to grow on agar media with urea as the sole nitrogen source (PubMed:23653445). Leads to the inactivation of the URE1 urease and reduces the efficacy of brain invasion in mice (PubMed:23653445).</text>
</comment>
<comment type="similarity">
    <text evidence="3">Belongs to the UreF family.</text>
</comment>
<feature type="chain" id="PRO_0000460746" description="Urease accessory protein 6">
    <location>
        <begin position="1"/>
        <end position="317"/>
    </location>
</feature>
<organism>
    <name type="scientific">Cryptococcus neoformans var. grubii serotype A (strain H99 / ATCC 208821 / CBS 10515 / FGSC 9487)</name>
    <name type="common">Filobasidiella neoformans var. grubii</name>
    <dbReference type="NCBI Taxonomy" id="235443"/>
    <lineage>
        <taxon>Eukaryota</taxon>
        <taxon>Fungi</taxon>
        <taxon>Dikarya</taxon>
        <taxon>Basidiomycota</taxon>
        <taxon>Agaricomycotina</taxon>
        <taxon>Tremellomycetes</taxon>
        <taxon>Tremellales</taxon>
        <taxon>Cryptococcaceae</taxon>
        <taxon>Cryptococcus</taxon>
        <taxon>Cryptococcus neoformans species complex</taxon>
    </lineage>
</organism>